<accession>Q5FUG4</accession>
<evidence type="ECO:0000255" key="1">
    <source>
        <dbReference type="HAMAP-Rule" id="MF_01031"/>
    </source>
</evidence>
<feature type="chain" id="PRO_0000141823" description="3-isopropylmalate dehydratase small subunit">
    <location>
        <begin position="1"/>
        <end position="208"/>
    </location>
</feature>
<name>LEUD_GLUOX</name>
<proteinExistence type="inferred from homology"/>
<reference key="1">
    <citation type="journal article" date="2005" name="Nat. Biotechnol.">
        <title>Complete genome sequence of the acetic acid bacterium Gluconobacter oxydans.</title>
        <authorList>
            <person name="Prust C."/>
            <person name="Hoffmeister M."/>
            <person name="Liesegang H."/>
            <person name="Wiezer A."/>
            <person name="Fricke W.F."/>
            <person name="Ehrenreich A."/>
            <person name="Gottschalk G."/>
            <person name="Deppenmeier U."/>
        </authorList>
    </citation>
    <scope>NUCLEOTIDE SEQUENCE [LARGE SCALE GENOMIC DNA]</scope>
    <source>
        <strain>621H</strain>
    </source>
</reference>
<protein>
    <recommendedName>
        <fullName evidence="1">3-isopropylmalate dehydratase small subunit</fullName>
        <ecNumber evidence="1">4.2.1.33</ecNumber>
    </recommendedName>
    <alternativeName>
        <fullName evidence="1">Alpha-IPM isomerase</fullName>
        <shortName evidence="1">IPMI</shortName>
    </alternativeName>
    <alternativeName>
        <fullName evidence="1">Isopropylmalate isomerase</fullName>
    </alternativeName>
</protein>
<gene>
    <name evidence="1" type="primary">leuD</name>
    <name type="ordered locus">GOX0192</name>
</gene>
<organism>
    <name type="scientific">Gluconobacter oxydans (strain 621H)</name>
    <name type="common">Gluconobacter suboxydans</name>
    <dbReference type="NCBI Taxonomy" id="290633"/>
    <lineage>
        <taxon>Bacteria</taxon>
        <taxon>Pseudomonadati</taxon>
        <taxon>Pseudomonadota</taxon>
        <taxon>Alphaproteobacteria</taxon>
        <taxon>Acetobacterales</taxon>
        <taxon>Acetobacteraceae</taxon>
        <taxon>Gluconobacter</taxon>
    </lineage>
</organism>
<dbReference type="EC" id="4.2.1.33" evidence="1"/>
<dbReference type="EMBL" id="CP000009">
    <property type="protein sequence ID" value="AAW59982.1"/>
    <property type="molecule type" value="Genomic_DNA"/>
</dbReference>
<dbReference type="RefSeq" id="WP_011251785.1">
    <property type="nucleotide sequence ID" value="NC_006677.1"/>
</dbReference>
<dbReference type="SMR" id="Q5FUG4"/>
<dbReference type="STRING" id="290633.GOX0192"/>
<dbReference type="KEGG" id="gox:GOX0192"/>
<dbReference type="eggNOG" id="COG0066">
    <property type="taxonomic scope" value="Bacteria"/>
</dbReference>
<dbReference type="HOGENOM" id="CLU_081378_0_3_5"/>
<dbReference type="UniPathway" id="UPA00048">
    <property type="reaction ID" value="UER00071"/>
</dbReference>
<dbReference type="Proteomes" id="UP000006375">
    <property type="component" value="Chromosome"/>
</dbReference>
<dbReference type="GO" id="GO:0009316">
    <property type="term" value="C:3-isopropylmalate dehydratase complex"/>
    <property type="evidence" value="ECO:0007669"/>
    <property type="project" value="InterPro"/>
</dbReference>
<dbReference type="GO" id="GO:0003861">
    <property type="term" value="F:3-isopropylmalate dehydratase activity"/>
    <property type="evidence" value="ECO:0007669"/>
    <property type="project" value="UniProtKB-UniRule"/>
</dbReference>
<dbReference type="GO" id="GO:0009098">
    <property type="term" value="P:L-leucine biosynthetic process"/>
    <property type="evidence" value="ECO:0007669"/>
    <property type="project" value="UniProtKB-UniRule"/>
</dbReference>
<dbReference type="CDD" id="cd01577">
    <property type="entry name" value="IPMI_Swivel"/>
    <property type="match status" value="1"/>
</dbReference>
<dbReference type="FunFam" id="3.20.19.10:FF:000003">
    <property type="entry name" value="3-isopropylmalate dehydratase small subunit"/>
    <property type="match status" value="1"/>
</dbReference>
<dbReference type="Gene3D" id="3.20.19.10">
    <property type="entry name" value="Aconitase, domain 4"/>
    <property type="match status" value="1"/>
</dbReference>
<dbReference type="HAMAP" id="MF_01031">
    <property type="entry name" value="LeuD_type1"/>
    <property type="match status" value="1"/>
</dbReference>
<dbReference type="InterPro" id="IPR004431">
    <property type="entry name" value="3-IsopropMal_deHydase_ssu"/>
</dbReference>
<dbReference type="InterPro" id="IPR015928">
    <property type="entry name" value="Aconitase/3IPM_dehydase_swvl"/>
</dbReference>
<dbReference type="InterPro" id="IPR000573">
    <property type="entry name" value="AconitaseA/IPMdHydase_ssu_swvl"/>
</dbReference>
<dbReference type="InterPro" id="IPR033940">
    <property type="entry name" value="IPMI_Swivel"/>
</dbReference>
<dbReference type="InterPro" id="IPR050075">
    <property type="entry name" value="LeuD"/>
</dbReference>
<dbReference type="NCBIfam" id="TIGR00171">
    <property type="entry name" value="leuD"/>
    <property type="match status" value="1"/>
</dbReference>
<dbReference type="NCBIfam" id="NF002458">
    <property type="entry name" value="PRK01641.1"/>
    <property type="match status" value="1"/>
</dbReference>
<dbReference type="PANTHER" id="PTHR43345:SF5">
    <property type="entry name" value="3-ISOPROPYLMALATE DEHYDRATASE SMALL SUBUNIT"/>
    <property type="match status" value="1"/>
</dbReference>
<dbReference type="PANTHER" id="PTHR43345">
    <property type="entry name" value="3-ISOPROPYLMALATE DEHYDRATASE SMALL SUBUNIT 2-RELATED-RELATED"/>
    <property type="match status" value="1"/>
</dbReference>
<dbReference type="Pfam" id="PF00694">
    <property type="entry name" value="Aconitase_C"/>
    <property type="match status" value="1"/>
</dbReference>
<dbReference type="SUPFAM" id="SSF52016">
    <property type="entry name" value="LeuD/IlvD-like"/>
    <property type="match status" value="1"/>
</dbReference>
<sequence length="208" mass="23414">MDKFTELTAIAAPMPTENIDTDQIIPARFLKTIQRTGLGKNAFAAQRYDADGNEKPDFVLNQEPYRHAEILITYDNLGCGSSREHAPWALLDFGIRCVIAPSFADIFFNNCFKNGILPIRLPREICDELMDDARQGANSRLTVDLERQVIVRPNGEGIPFDVDPFRRHMLLEGLDDIGQTMAHDAEITSFEHRPSRAWVPSITIGTVK</sequence>
<keyword id="KW-0028">Amino-acid biosynthesis</keyword>
<keyword id="KW-0100">Branched-chain amino acid biosynthesis</keyword>
<keyword id="KW-0432">Leucine biosynthesis</keyword>
<keyword id="KW-0456">Lyase</keyword>
<keyword id="KW-1185">Reference proteome</keyword>
<comment type="function">
    <text evidence="1">Catalyzes the isomerization between 2-isopropylmalate and 3-isopropylmalate, via the formation of 2-isopropylmaleate.</text>
</comment>
<comment type="catalytic activity">
    <reaction evidence="1">
        <text>(2R,3S)-3-isopropylmalate = (2S)-2-isopropylmalate</text>
        <dbReference type="Rhea" id="RHEA:32287"/>
        <dbReference type="ChEBI" id="CHEBI:1178"/>
        <dbReference type="ChEBI" id="CHEBI:35121"/>
        <dbReference type="EC" id="4.2.1.33"/>
    </reaction>
</comment>
<comment type="pathway">
    <text evidence="1">Amino-acid biosynthesis; L-leucine biosynthesis; L-leucine from 3-methyl-2-oxobutanoate: step 2/4.</text>
</comment>
<comment type="subunit">
    <text evidence="1">Heterodimer of LeuC and LeuD.</text>
</comment>
<comment type="similarity">
    <text evidence="1">Belongs to the LeuD family. LeuD type 1 subfamily.</text>
</comment>